<feature type="chain" id="PRO_0000319929" description="HTH-type quorum sensing-dependent transcriptional regulator VjbR">
    <location>
        <begin position="1"/>
        <end position="259"/>
    </location>
</feature>
<feature type="domain" description="HTH luxR-type" evidence="3">
    <location>
        <begin position="183"/>
        <end position="248"/>
    </location>
</feature>
<feature type="DNA-binding region" description="H-T-H motif" evidence="3">
    <location>
        <begin position="207"/>
        <end position="226"/>
    </location>
</feature>
<feature type="region of interest" description="C12-HSL binding" evidence="2">
    <location>
        <begin position="76"/>
        <end position="179"/>
    </location>
</feature>
<gene>
    <name type="primary">vjbR</name>
    <name type="ordered locus">BRA0119</name>
    <name type="ordered locus">BS1330_II0118</name>
</gene>
<proteinExistence type="inferred from homology"/>
<evidence type="ECO:0000250" key="1">
    <source>
        <dbReference type="UniProtKB" id="Q8YAY5"/>
    </source>
</evidence>
<evidence type="ECO:0000255" key="2"/>
<evidence type="ECO:0000255" key="3">
    <source>
        <dbReference type="PROSITE-ProRule" id="PRU00411"/>
    </source>
</evidence>
<reference key="1">
    <citation type="journal article" date="2002" name="Proc. Natl. Acad. Sci. U.S.A.">
        <title>The Brucella suis genome reveals fundamental similarities between animal and plant pathogens and symbionts.</title>
        <authorList>
            <person name="Paulsen I.T."/>
            <person name="Seshadri R."/>
            <person name="Nelson K.E."/>
            <person name="Eisen J.A."/>
            <person name="Heidelberg J.F."/>
            <person name="Read T.D."/>
            <person name="Dodson R.J."/>
            <person name="Umayam L.A."/>
            <person name="Brinkac L.M."/>
            <person name="Beanan M.J."/>
            <person name="Daugherty S.C."/>
            <person name="DeBoy R.T."/>
            <person name="Durkin A.S."/>
            <person name="Kolonay J.F."/>
            <person name="Madupu R."/>
            <person name="Nelson W.C."/>
            <person name="Ayodeji B."/>
            <person name="Kraul M."/>
            <person name="Shetty J."/>
            <person name="Malek J.A."/>
            <person name="Van Aken S.E."/>
            <person name="Riedmuller S."/>
            <person name="Tettelin H."/>
            <person name="Gill S.R."/>
            <person name="White O."/>
            <person name="Salzberg S.L."/>
            <person name="Hoover D.L."/>
            <person name="Lindler L.E."/>
            <person name="Halling S.M."/>
            <person name="Boyle S.M."/>
            <person name="Fraser C.M."/>
        </authorList>
    </citation>
    <scope>NUCLEOTIDE SEQUENCE [LARGE SCALE GENOMIC DNA]</scope>
    <source>
        <strain>1330</strain>
    </source>
</reference>
<reference key="2">
    <citation type="journal article" date="2011" name="J. Bacteriol.">
        <title>Revised genome sequence of Brucella suis 1330.</title>
        <authorList>
            <person name="Tae H."/>
            <person name="Shallom S."/>
            <person name="Settlage R."/>
            <person name="Preston D."/>
            <person name="Adams L.G."/>
            <person name="Garner H.R."/>
        </authorList>
    </citation>
    <scope>NUCLEOTIDE SEQUENCE [LARGE SCALE GENOMIC DNA]</scope>
    <source>
        <strain>1330</strain>
    </source>
</reference>
<dbReference type="EMBL" id="AE014292">
    <property type="protein sequence ID" value="AAN33328.1"/>
    <property type="molecule type" value="Genomic_DNA"/>
</dbReference>
<dbReference type="EMBL" id="CP002998">
    <property type="protein sequence ID" value="AEM19607.1"/>
    <property type="molecule type" value="Genomic_DNA"/>
</dbReference>
<dbReference type="RefSeq" id="WP_002966460.1">
    <property type="nucleotide sequence ID" value="NZ_KN046805.1"/>
</dbReference>
<dbReference type="SMR" id="Q8FXF9"/>
<dbReference type="GeneID" id="93015909"/>
<dbReference type="KEGG" id="bms:BRA0119"/>
<dbReference type="KEGG" id="bsi:BS1330_II0118"/>
<dbReference type="PATRIC" id="fig|204722.22.peg.2909"/>
<dbReference type="HOGENOM" id="CLU_072786_7_0_5"/>
<dbReference type="PhylomeDB" id="Q8FXF9"/>
<dbReference type="PRO" id="PR:Q8FXF9"/>
<dbReference type="Proteomes" id="UP000007104">
    <property type="component" value="Chromosome II"/>
</dbReference>
<dbReference type="GO" id="GO:0003677">
    <property type="term" value="F:DNA binding"/>
    <property type="evidence" value="ECO:0007669"/>
    <property type="project" value="UniProtKB-KW"/>
</dbReference>
<dbReference type="GO" id="GO:0009372">
    <property type="term" value="P:quorum sensing"/>
    <property type="evidence" value="ECO:0007669"/>
    <property type="project" value="UniProtKB-KW"/>
</dbReference>
<dbReference type="GO" id="GO:0006355">
    <property type="term" value="P:regulation of DNA-templated transcription"/>
    <property type="evidence" value="ECO:0007669"/>
    <property type="project" value="InterPro"/>
</dbReference>
<dbReference type="CDD" id="cd06170">
    <property type="entry name" value="LuxR_C_like"/>
    <property type="match status" value="1"/>
</dbReference>
<dbReference type="Gene3D" id="3.30.450.80">
    <property type="entry name" value="Transcription factor LuxR-like, autoinducer-binding domain"/>
    <property type="match status" value="1"/>
</dbReference>
<dbReference type="Gene3D" id="1.10.10.10">
    <property type="entry name" value="Winged helix-like DNA-binding domain superfamily/Winged helix DNA-binding domain"/>
    <property type="match status" value="1"/>
</dbReference>
<dbReference type="InterPro" id="IPR016032">
    <property type="entry name" value="Sig_transdc_resp-reg_C-effctor"/>
</dbReference>
<dbReference type="InterPro" id="IPR005143">
    <property type="entry name" value="TF_LuxR_autoind-bd_dom"/>
</dbReference>
<dbReference type="InterPro" id="IPR036693">
    <property type="entry name" value="TF_LuxR_autoind-bd_dom_sf"/>
</dbReference>
<dbReference type="InterPro" id="IPR000792">
    <property type="entry name" value="Tscrpt_reg_LuxR_C"/>
</dbReference>
<dbReference type="InterPro" id="IPR036388">
    <property type="entry name" value="WH-like_DNA-bd_sf"/>
</dbReference>
<dbReference type="PANTHER" id="PTHR44688">
    <property type="entry name" value="DNA-BINDING TRANSCRIPTIONAL ACTIVATOR DEVR_DOSR"/>
    <property type="match status" value="1"/>
</dbReference>
<dbReference type="PANTHER" id="PTHR44688:SF16">
    <property type="entry name" value="DNA-BINDING TRANSCRIPTIONAL ACTIVATOR DEVR_DOSR"/>
    <property type="match status" value="1"/>
</dbReference>
<dbReference type="Pfam" id="PF03472">
    <property type="entry name" value="Autoind_bind"/>
    <property type="match status" value="1"/>
</dbReference>
<dbReference type="Pfam" id="PF00196">
    <property type="entry name" value="GerE"/>
    <property type="match status" value="1"/>
</dbReference>
<dbReference type="PRINTS" id="PR00038">
    <property type="entry name" value="HTHLUXR"/>
</dbReference>
<dbReference type="SMART" id="SM00421">
    <property type="entry name" value="HTH_LUXR"/>
    <property type="match status" value="1"/>
</dbReference>
<dbReference type="SUPFAM" id="SSF46894">
    <property type="entry name" value="C-terminal effector domain of the bipartite response regulators"/>
    <property type="match status" value="1"/>
</dbReference>
<dbReference type="SUPFAM" id="SSF75516">
    <property type="entry name" value="Pheromone-binding domain of LuxR-like quorum-sensing transcription factors"/>
    <property type="match status" value="1"/>
</dbReference>
<dbReference type="PROSITE" id="PS50043">
    <property type="entry name" value="HTH_LUXR_2"/>
    <property type="match status" value="1"/>
</dbReference>
<keyword id="KW-0238">DNA-binding</keyword>
<keyword id="KW-0673">Quorum sensing</keyword>
<keyword id="KW-0804">Transcription</keyword>
<keyword id="KW-0805">Transcription regulation</keyword>
<name>VJBR_BRUSU</name>
<organism>
    <name type="scientific">Brucella suis biovar 1 (strain 1330)</name>
    <dbReference type="NCBI Taxonomy" id="204722"/>
    <lineage>
        <taxon>Bacteria</taxon>
        <taxon>Pseudomonadati</taxon>
        <taxon>Pseudomonadota</taxon>
        <taxon>Alphaproteobacteria</taxon>
        <taxon>Hyphomicrobiales</taxon>
        <taxon>Brucellaceae</taxon>
        <taxon>Brucella/Ochrobactrum group</taxon>
        <taxon>Brucella</taxon>
    </lineage>
</organism>
<sequence>MSLDLVHFPNYKKTFFGSSFQSDTLALLTRIRDEIGCRYVTHTYRGRVGDCTKVNSADLTVLMTLPATWVARYSSKNYFAIDPVFQEDAPYYRNDTSAIARDLKEDADICPAVAELLHDAEKHGLGNLFIAVSARNPKGVAGCTVFTFEVEDEDRTQFLARMRPRLLSLAGIIHGTVCGCKDANSVASLLTPREVDCLRWAANGKTDGEIAEILSIARWTVVTYLQNAKIKLNCSNRTSAVATALSLGIIDMPEVQHLV</sequence>
<comment type="function">
    <text evidence="1">Transcriptional regulator involved in the global control of Brucella gene expression. Mediates the effects of the quorum sensing autoinducer C12-HSL (N-dodecanoyl-homoserine lactone) on a large and diverse number of genes.</text>
</comment>
<protein>
    <recommendedName>
        <fullName>HTH-type quorum sensing-dependent transcriptional regulator VjbR</fullName>
    </recommendedName>
</protein>
<accession>Q8FXF9</accession>
<accession>G0KEW3</accession>